<dbReference type="EMBL" id="CP000239">
    <property type="protein sequence ID" value="ABC98518.1"/>
    <property type="molecule type" value="Genomic_DNA"/>
</dbReference>
<dbReference type="RefSeq" id="WP_011429207.1">
    <property type="nucleotide sequence ID" value="NC_007775.1"/>
</dbReference>
<dbReference type="SMR" id="Q2JXG8"/>
<dbReference type="STRING" id="321327.CYA_0296"/>
<dbReference type="KEGG" id="cya:CYA_0296"/>
<dbReference type="eggNOG" id="COG0445">
    <property type="taxonomic scope" value="Bacteria"/>
</dbReference>
<dbReference type="HOGENOM" id="CLU_007831_2_2_3"/>
<dbReference type="OrthoDB" id="9815560at2"/>
<dbReference type="Proteomes" id="UP000008818">
    <property type="component" value="Chromosome"/>
</dbReference>
<dbReference type="GO" id="GO:0005737">
    <property type="term" value="C:cytoplasm"/>
    <property type="evidence" value="ECO:0007669"/>
    <property type="project" value="UniProtKB-SubCell"/>
</dbReference>
<dbReference type="GO" id="GO:0050660">
    <property type="term" value="F:flavin adenine dinucleotide binding"/>
    <property type="evidence" value="ECO:0007669"/>
    <property type="project" value="UniProtKB-UniRule"/>
</dbReference>
<dbReference type="GO" id="GO:0030488">
    <property type="term" value="P:tRNA methylation"/>
    <property type="evidence" value="ECO:0007669"/>
    <property type="project" value="TreeGrafter"/>
</dbReference>
<dbReference type="GO" id="GO:0002098">
    <property type="term" value="P:tRNA wobble uridine modification"/>
    <property type="evidence" value="ECO:0007669"/>
    <property type="project" value="InterPro"/>
</dbReference>
<dbReference type="FunFam" id="1.10.10.1800:FF:000001">
    <property type="entry name" value="tRNA uridine 5-carboxymethylaminomethyl modification enzyme MnmG"/>
    <property type="match status" value="1"/>
</dbReference>
<dbReference type="FunFam" id="1.10.150.570:FF:000001">
    <property type="entry name" value="tRNA uridine 5-carboxymethylaminomethyl modification enzyme MnmG"/>
    <property type="match status" value="1"/>
</dbReference>
<dbReference type="FunFam" id="3.50.50.60:FF:000094">
    <property type="entry name" value="tRNA uridine 5-carboxymethylaminomethyl modification enzyme MnmG"/>
    <property type="match status" value="1"/>
</dbReference>
<dbReference type="FunFam" id="3.50.50.60:FF:000119">
    <property type="entry name" value="tRNA uridine 5-carboxymethylaminomethyl modification enzyme MnmG"/>
    <property type="match status" value="1"/>
</dbReference>
<dbReference type="Gene3D" id="3.50.50.60">
    <property type="entry name" value="FAD/NAD(P)-binding domain"/>
    <property type="match status" value="2"/>
</dbReference>
<dbReference type="Gene3D" id="1.10.150.570">
    <property type="entry name" value="GidA associated domain, C-terminal subdomain"/>
    <property type="match status" value="1"/>
</dbReference>
<dbReference type="Gene3D" id="1.10.10.1800">
    <property type="entry name" value="tRNA uridine 5-carboxymethylaminomethyl modification enzyme MnmG/GidA"/>
    <property type="match status" value="1"/>
</dbReference>
<dbReference type="HAMAP" id="MF_00129">
    <property type="entry name" value="MnmG_GidA"/>
    <property type="match status" value="1"/>
</dbReference>
<dbReference type="InterPro" id="IPR036188">
    <property type="entry name" value="FAD/NAD-bd_sf"/>
</dbReference>
<dbReference type="InterPro" id="IPR049312">
    <property type="entry name" value="GIDA_C_N"/>
</dbReference>
<dbReference type="InterPro" id="IPR004416">
    <property type="entry name" value="MnmG"/>
</dbReference>
<dbReference type="InterPro" id="IPR002218">
    <property type="entry name" value="MnmG-rel"/>
</dbReference>
<dbReference type="InterPro" id="IPR020595">
    <property type="entry name" value="MnmG-rel_CS"/>
</dbReference>
<dbReference type="InterPro" id="IPR026904">
    <property type="entry name" value="MnmG_C"/>
</dbReference>
<dbReference type="InterPro" id="IPR047001">
    <property type="entry name" value="MnmG_C_subdom"/>
</dbReference>
<dbReference type="InterPro" id="IPR044920">
    <property type="entry name" value="MnmG_C_subdom_sf"/>
</dbReference>
<dbReference type="InterPro" id="IPR040131">
    <property type="entry name" value="MnmG_N"/>
</dbReference>
<dbReference type="NCBIfam" id="TIGR00136">
    <property type="entry name" value="mnmG_gidA"/>
    <property type="match status" value="1"/>
</dbReference>
<dbReference type="PANTHER" id="PTHR11806">
    <property type="entry name" value="GLUCOSE INHIBITED DIVISION PROTEIN A"/>
    <property type="match status" value="1"/>
</dbReference>
<dbReference type="PANTHER" id="PTHR11806:SF0">
    <property type="entry name" value="PROTEIN MTO1 HOMOLOG, MITOCHONDRIAL"/>
    <property type="match status" value="1"/>
</dbReference>
<dbReference type="Pfam" id="PF01134">
    <property type="entry name" value="GIDA"/>
    <property type="match status" value="1"/>
</dbReference>
<dbReference type="Pfam" id="PF21680">
    <property type="entry name" value="GIDA_C_1st"/>
    <property type="match status" value="1"/>
</dbReference>
<dbReference type="Pfam" id="PF13932">
    <property type="entry name" value="SAM_GIDA_C"/>
    <property type="match status" value="1"/>
</dbReference>
<dbReference type="SMART" id="SM01228">
    <property type="entry name" value="GIDA_assoc_3"/>
    <property type="match status" value="1"/>
</dbReference>
<dbReference type="SUPFAM" id="SSF51905">
    <property type="entry name" value="FAD/NAD(P)-binding domain"/>
    <property type="match status" value="1"/>
</dbReference>
<dbReference type="PROSITE" id="PS01280">
    <property type="entry name" value="GIDA_1"/>
    <property type="match status" value="1"/>
</dbReference>
<dbReference type="PROSITE" id="PS01281">
    <property type="entry name" value="GIDA_2"/>
    <property type="match status" value="1"/>
</dbReference>
<organism>
    <name type="scientific">Synechococcus sp. (strain JA-3-3Ab)</name>
    <name type="common">Cyanobacteria bacterium Yellowstone A-Prime</name>
    <dbReference type="NCBI Taxonomy" id="321327"/>
    <lineage>
        <taxon>Bacteria</taxon>
        <taxon>Bacillati</taxon>
        <taxon>Cyanobacteriota</taxon>
        <taxon>Cyanophyceae</taxon>
        <taxon>Synechococcales</taxon>
        <taxon>Synechococcaceae</taxon>
        <taxon>Synechococcus</taxon>
    </lineage>
</organism>
<evidence type="ECO:0000255" key="1">
    <source>
        <dbReference type="HAMAP-Rule" id="MF_00129"/>
    </source>
</evidence>
<comment type="function">
    <text evidence="1">NAD-binding protein involved in the addition of a carboxymethylaminomethyl (cmnm) group at the wobble position (U34) of certain tRNAs, forming tRNA-cmnm(5)s(2)U34.</text>
</comment>
<comment type="cofactor">
    <cofactor evidence="1">
        <name>FAD</name>
        <dbReference type="ChEBI" id="CHEBI:57692"/>
    </cofactor>
</comment>
<comment type="subunit">
    <text evidence="1">Homodimer. Heterotetramer of two MnmE and two MnmG subunits.</text>
</comment>
<comment type="subcellular location">
    <subcellularLocation>
        <location evidence="1">Cytoplasm</location>
    </subcellularLocation>
</comment>
<comment type="similarity">
    <text evidence="1">Belongs to the MnmG family.</text>
</comment>
<sequence length="643" mass="71574">MLKVGRDNVDFLDHYDVIVVGGGHAGCEAALAAARLGCNTLMLTLNLDKIAWQPCNPAVGGPAKSQLVHEIDALGGEMGKVTDRTYLQKRVLNRSRGPAVWALRAQTDKREYARVMRSVVENQPNLSIREGTVTDLVLGRNDEVVGVVTHFGSVFGCGAVILTTGTFLGGRIWIGRHWQPAGRAGEFAVEGLTDTLRQLGFETGRLKTGTPARVDRRSVDFSVMERQPGDPDLRWFSFDPEVWVPREQMDCYLTRTTPETHRIIRENLHETPVYGGWVEAKGPRYCPSIEDKIVRFADKESHQIFIEPEGRDLPELYIQGFSTGMPEKIQIQMLRSLPGLERCVMLRPAYAVEYDYLPATQLYPTLMTKKVQGLFCAGQINGTTGYEEAAAQGLIAGINAARLVQGKPLVTLPRESSYIGTLIDDLCTKELREPYRMLTSRSEYRLILRADNADQRLTPLGREWGLIDDRRWALFQAKQARIAAEIERLETQRVKAHDPAGIHLSQLTGQGIKGSATLAELLRRNPIHYADLLELGLGNEELDPFEQEAAEIAVKYSGYIQRQQAQIEQVSKQYHRPLPPDLDYHSIPTLSKESREKLAAVRPLTVGQAARIGGVNPADINALLIYLEVRQRQKTAAAAPVGA</sequence>
<proteinExistence type="inferred from homology"/>
<name>MNMG_SYNJA</name>
<gene>
    <name evidence="1" type="primary">mnmG</name>
    <name evidence="1" type="synonym">gidA</name>
    <name type="ordered locus">CYA_0296</name>
</gene>
<protein>
    <recommendedName>
        <fullName evidence="1">tRNA uridine 5-carboxymethylaminomethyl modification enzyme MnmG</fullName>
    </recommendedName>
    <alternativeName>
        <fullName evidence="1">Glucose-inhibited division protein A</fullName>
    </alternativeName>
</protein>
<keyword id="KW-0963">Cytoplasm</keyword>
<keyword id="KW-0274">FAD</keyword>
<keyword id="KW-0285">Flavoprotein</keyword>
<keyword id="KW-0520">NAD</keyword>
<keyword id="KW-0819">tRNA processing</keyword>
<accession>Q2JXG8</accession>
<feature type="chain" id="PRO_0000345346" description="tRNA uridine 5-carboxymethylaminomethyl modification enzyme MnmG">
    <location>
        <begin position="1"/>
        <end position="643"/>
    </location>
</feature>
<feature type="binding site" evidence="1">
    <location>
        <begin position="21"/>
        <end position="26"/>
    </location>
    <ligand>
        <name>FAD</name>
        <dbReference type="ChEBI" id="CHEBI:57692"/>
    </ligand>
</feature>
<feature type="binding site" evidence="1">
    <location>
        <begin position="282"/>
        <end position="296"/>
    </location>
    <ligand>
        <name>NAD(+)</name>
        <dbReference type="ChEBI" id="CHEBI:57540"/>
    </ligand>
</feature>
<reference key="1">
    <citation type="journal article" date="2007" name="ISME J.">
        <title>Population level functional diversity in a microbial community revealed by comparative genomic and metagenomic analyses.</title>
        <authorList>
            <person name="Bhaya D."/>
            <person name="Grossman A.R."/>
            <person name="Steunou A.-S."/>
            <person name="Khuri N."/>
            <person name="Cohan F.M."/>
            <person name="Hamamura N."/>
            <person name="Melendrez M.C."/>
            <person name="Bateson M.M."/>
            <person name="Ward D.M."/>
            <person name="Heidelberg J.F."/>
        </authorList>
    </citation>
    <scope>NUCLEOTIDE SEQUENCE [LARGE SCALE GENOMIC DNA]</scope>
    <source>
        <strain>JA-3-3Ab</strain>
    </source>
</reference>